<name>ATPE_HISS1</name>
<proteinExistence type="inferred from homology"/>
<protein>
    <recommendedName>
        <fullName evidence="1">ATP synthase epsilon chain</fullName>
    </recommendedName>
    <alternativeName>
        <fullName evidence="1">ATP synthase F1 sector epsilon subunit</fullName>
    </alternativeName>
    <alternativeName>
        <fullName evidence="1">F-ATPase epsilon subunit</fullName>
    </alternativeName>
</protein>
<organism>
    <name type="scientific">Histophilus somni (strain 129Pt)</name>
    <name type="common">Haemophilus somnus</name>
    <dbReference type="NCBI Taxonomy" id="205914"/>
    <lineage>
        <taxon>Bacteria</taxon>
        <taxon>Pseudomonadati</taxon>
        <taxon>Pseudomonadota</taxon>
        <taxon>Gammaproteobacteria</taxon>
        <taxon>Pasteurellales</taxon>
        <taxon>Pasteurellaceae</taxon>
        <taxon>Histophilus</taxon>
    </lineage>
</organism>
<keyword id="KW-0066">ATP synthesis</keyword>
<keyword id="KW-0997">Cell inner membrane</keyword>
<keyword id="KW-1003">Cell membrane</keyword>
<keyword id="KW-0139">CF(1)</keyword>
<keyword id="KW-0375">Hydrogen ion transport</keyword>
<keyword id="KW-0406">Ion transport</keyword>
<keyword id="KW-0472">Membrane</keyword>
<keyword id="KW-0813">Transport</keyword>
<evidence type="ECO:0000255" key="1">
    <source>
        <dbReference type="HAMAP-Rule" id="MF_00530"/>
    </source>
</evidence>
<feature type="chain" id="PRO_0000265821" description="ATP synthase epsilon chain">
    <location>
        <begin position="1"/>
        <end position="142"/>
    </location>
</feature>
<comment type="function">
    <text evidence="1">Produces ATP from ADP in the presence of a proton gradient across the membrane.</text>
</comment>
<comment type="subunit">
    <text>F-type ATPases have 2 components, CF(1) - the catalytic core - and CF(0) - the membrane proton channel. CF(1) has five subunits: alpha(3), beta(3), gamma(1), delta(1), epsilon(1). CF(0) has three main subunits: a, b and c.</text>
</comment>
<comment type="subcellular location">
    <subcellularLocation>
        <location evidence="1">Cell inner membrane</location>
        <topology evidence="1">Peripheral membrane protein</topology>
    </subcellularLocation>
</comment>
<comment type="similarity">
    <text evidence="1">Belongs to the ATPase epsilon chain family.</text>
</comment>
<gene>
    <name evidence="1" type="primary">atpC</name>
    <name type="ordered locus">HS_1695</name>
</gene>
<reference key="1">
    <citation type="journal article" date="2007" name="J. Bacteriol.">
        <title>Complete genome sequence of Haemophilus somnus (Histophilus somni) strain 129Pt and comparison to Haemophilus ducreyi 35000HP and Haemophilus influenzae Rd.</title>
        <authorList>
            <person name="Challacombe J.F."/>
            <person name="Duncan A.J."/>
            <person name="Brettin T.S."/>
            <person name="Bruce D."/>
            <person name="Chertkov O."/>
            <person name="Detter J.C."/>
            <person name="Han C.S."/>
            <person name="Misra M."/>
            <person name="Richardson P."/>
            <person name="Tapia R."/>
            <person name="Thayer N."/>
            <person name="Xie G."/>
            <person name="Inzana T.J."/>
        </authorList>
    </citation>
    <scope>NUCLEOTIDE SEQUENCE [LARGE SCALE GENOMIC DNA]</scope>
    <source>
        <strain>129Pt</strain>
    </source>
</reference>
<sequence length="142" mass="15686">MATFKLIVVSAEQHIFNGEVKGIQATGSEGELGILAGHLPLLTAIKPGIIKITLEDDTEEVIYISGGFLEVQPTIVTVLADVAIRGKELDRERILEAKRKAEQNIVSGAKDANYEMLVSKLSRELAKLRAYELTDRLTQRKR</sequence>
<dbReference type="EMBL" id="CP000436">
    <property type="protein sequence ID" value="ABI25963.1"/>
    <property type="molecule type" value="Genomic_DNA"/>
</dbReference>
<dbReference type="SMR" id="Q0I5X4"/>
<dbReference type="KEGG" id="hso:HS_1695"/>
<dbReference type="eggNOG" id="COG0355">
    <property type="taxonomic scope" value="Bacteria"/>
</dbReference>
<dbReference type="HOGENOM" id="CLU_084338_2_0_6"/>
<dbReference type="GO" id="GO:0005886">
    <property type="term" value="C:plasma membrane"/>
    <property type="evidence" value="ECO:0007669"/>
    <property type="project" value="UniProtKB-SubCell"/>
</dbReference>
<dbReference type="GO" id="GO:0045259">
    <property type="term" value="C:proton-transporting ATP synthase complex"/>
    <property type="evidence" value="ECO:0007669"/>
    <property type="project" value="UniProtKB-KW"/>
</dbReference>
<dbReference type="GO" id="GO:0005524">
    <property type="term" value="F:ATP binding"/>
    <property type="evidence" value="ECO:0007669"/>
    <property type="project" value="UniProtKB-UniRule"/>
</dbReference>
<dbReference type="GO" id="GO:0046933">
    <property type="term" value="F:proton-transporting ATP synthase activity, rotational mechanism"/>
    <property type="evidence" value="ECO:0007669"/>
    <property type="project" value="UniProtKB-UniRule"/>
</dbReference>
<dbReference type="CDD" id="cd12152">
    <property type="entry name" value="F1-ATPase_delta"/>
    <property type="match status" value="1"/>
</dbReference>
<dbReference type="FunFam" id="2.60.15.10:FF:000001">
    <property type="entry name" value="ATP synthase epsilon chain"/>
    <property type="match status" value="1"/>
</dbReference>
<dbReference type="Gene3D" id="1.20.5.440">
    <property type="entry name" value="ATP synthase delta/epsilon subunit, C-terminal domain"/>
    <property type="match status" value="1"/>
</dbReference>
<dbReference type="Gene3D" id="2.60.15.10">
    <property type="entry name" value="F0F1 ATP synthase delta/epsilon subunit, N-terminal"/>
    <property type="match status" value="1"/>
</dbReference>
<dbReference type="HAMAP" id="MF_00530">
    <property type="entry name" value="ATP_synth_epsil_bac"/>
    <property type="match status" value="1"/>
</dbReference>
<dbReference type="InterPro" id="IPR036794">
    <property type="entry name" value="ATP_F1_dsu/esu_C_sf"/>
</dbReference>
<dbReference type="InterPro" id="IPR001469">
    <property type="entry name" value="ATP_synth_F1_dsu/esu"/>
</dbReference>
<dbReference type="InterPro" id="IPR020546">
    <property type="entry name" value="ATP_synth_F1_dsu/esu_N"/>
</dbReference>
<dbReference type="InterPro" id="IPR036771">
    <property type="entry name" value="ATPsynth_dsu/esu_N"/>
</dbReference>
<dbReference type="NCBIfam" id="TIGR01216">
    <property type="entry name" value="ATP_synt_epsi"/>
    <property type="match status" value="1"/>
</dbReference>
<dbReference type="NCBIfam" id="NF001847">
    <property type="entry name" value="PRK00571.1-4"/>
    <property type="match status" value="1"/>
</dbReference>
<dbReference type="PANTHER" id="PTHR13822">
    <property type="entry name" value="ATP SYNTHASE DELTA/EPSILON CHAIN"/>
    <property type="match status" value="1"/>
</dbReference>
<dbReference type="PANTHER" id="PTHR13822:SF10">
    <property type="entry name" value="ATP SYNTHASE EPSILON CHAIN, CHLOROPLASTIC"/>
    <property type="match status" value="1"/>
</dbReference>
<dbReference type="Pfam" id="PF02823">
    <property type="entry name" value="ATP-synt_DE_N"/>
    <property type="match status" value="1"/>
</dbReference>
<dbReference type="SUPFAM" id="SSF46604">
    <property type="entry name" value="Epsilon subunit of F1F0-ATP synthase C-terminal domain"/>
    <property type="match status" value="1"/>
</dbReference>
<dbReference type="SUPFAM" id="SSF51344">
    <property type="entry name" value="Epsilon subunit of F1F0-ATP synthase N-terminal domain"/>
    <property type="match status" value="1"/>
</dbReference>
<accession>Q0I5X4</accession>